<evidence type="ECO:0000250" key="1"/>
<evidence type="ECO:0000255" key="2">
    <source>
        <dbReference type="PROSITE-ProRule" id="PRU00159"/>
    </source>
</evidence>
<evidence type="ECO:0000255" key="3">
    <source>
        <dbReference type="PROSITE-ProRule" id="PRU10027"/>
    </source>
</evidence>
<evidence type="ECO:0000269" key="4">
    <source>
    </source>
</evidence>
<evidence type="ECO:0000269" key="5">
    <source>
    </source>
</evidence>
<evidence type="ECO:0000269" key="6">
    <source>
    </source>
</evidence>
<evidence type="ECO:0000269" key="7">
    <source>
    </source>
</evidence>
<evidence type="ECO:0000269" key="8">
    <source>
    </source>
</evidence>
<evidence type="ECO:0000305" key="9"/>
<proteinExistence type="evidence at protein level"/>
<sequence>MEQYEKEEKIGEGTYGVVYRARDKVTNETIALKKIRLEQEDEGVPSTAIREISLLKEMHHGNIVRLHDVIHSEKRIYLVFEYLDLDLKKFMDSCPEFAKNPTLIKSYLYQILRGVAYCHSHRVLHRDLKPQNLLIDRRTNALKLADFGLARAFGIPVRTFTHEVVTLWYRAPEILLGSRQYSTPVDMWSVGCIFAEMVNQKPLFPGDSEIDELFKIFRVLGTPNEQSWPGVSSLPDYKSAFPKWQAQDLATIVPTLDPAGLDLLSKMLRYEPNKRITARQALEHEYFKDLEMVQ</sequence>
<feature type="chain" id="PRO_0000085755" description="Cyclin-dependent kinase A-1">
    <location>
        <begin position="1"/>
        <end position="294"/>
    </location>
</feature>
<feature type="domain" description="Protein kinase" evidence="2">
    <location>
        <begin position="4"/>
        <end position="287"/>
    </location>
</feature>
<feature type="active site" description="Proton acceptor" evidence="2 3">
    <location>
        <position position="127"/>
    </location>
</feature>
<feature type="binding site" evidence="2">
    <location>
        <begin position="10"/>
        <end position="18"/>
    </location>
    <ligand>
        <name>ATP</name>
        <dbReference type="ChEBI" id="CHEBI:30616"/>
    </ligand>
</feature>
<feature type="binding site" evidence="2">
    <location>
        <position position="33"/>
    </location>
    <ligand>
        <name>ATP</name>
        <dbReference type="ChEBI" id="CHEBI:30616"/>
    </ligand>
</feature>
<feature type="modified residue" description="Phosphothreonine" evidence="1">
    <location>
        <position position="14"/>
    </location>
</feature>
<feature type="modified residue" description="Phosphotyrosine" evidence="1">
    <location>
        <position position="15"/>
    </location>
</feature>
<feature type="modified residue" description="Phosphothreonine; by CAK" evidence="4">
    <location>
        <position position="161"/>
    </location>
</feature>
<feature type="mutagenesis site" description="Loss of phosphorylation by CDKD-1." evidence="4">
    <original>T</original>
    <variation>A</variation>
    <location>
        <position position="161"/>
    </location>
</feature>
<gene>
    <name type="primary">CDKA-1</name>
    <name type="synonym">CDC2-1</name>
    <name type="ordered locus">Os03g0118400</name>
    <name type="ordered locus">LOC_Os03g02680</name>
</gene>
<comment type="catalytic activity">
    <reaction>
        <text>L-seryl-[protein] + ATP = O-phospho-L-seryl-[protein] + ADP + H(+)</text>
        <dbReference type="Rhea" id="RHEA:17989"/>
        <dbReference type="Rhea" id="RHEA-COMP:9863"/>
        <dbReference type="Rhea" id="RHEA-COMP:11604"/>
        <dbReference type="ChEBI" id="CHEBI:15378"/>
        <dbReference type="ChEBI" id="CHEBI:29999"/>
        <dbReference type="ChEBI" id="CHEBI:30616"/>
        <dbReference type="ChEBI" id="CHEBI:83421"/>
        <dbReference type="ChEBI" id="CHEBI:456216"/>
        <dbReference type="EC" id="2.7.11.22"/>
    </reaction>
</comment>
<comment type="catalytic activity">
    <reaction>
        <text>L-threonyl-[protein] + ATP = O-phospho-L-threonyl-[protein] + ADP + H(+)</text>
        <dbReference type="Rhea" id="RHEA:46608"/>
        <dbReference type="Rhea" id="RHEA-COMP:11060"/>
        <dbReference type="Rhea" id="RHEA-COMP:11605"/>
        <dbReference type="ChEBI" id="CHEBI:15378"/>
        <dbReference type="ChEBI" id="CHEBI:30013"/>
        <dbReference type="ChEBI" id="CHEBI:30616"/>
        <dbReference type="ChEBI" id="CHEBI:61977"/>
        <dbReference type="ChEBI" id="CHEBI:456216"/>
        <dbReference type="EC" id="2.7.11.22"/>
    </reaction>
</comment>
<comment type="catalytic activity">
    <reaction>
        <text>[DNA-directed RNA polymerase] + ATP = phospho-[DNA-directed RNA polymerase] + ADP + H(+)</text>
        <dbReference type="Rhea" id="RHEA:10216"/>
        <dbReference type="Rhea" id="RHEA-COMP:11321"/>
        <dbReference type="Rhea" id="RHEA-COMP:11322"/>
        <dbReference type="ChEBI" id="CHEBI:15378"/>
        <dbReference type="ChEBI" id="CHEBI:30616"/>
        <dbReference type="ChEBI" id="CHEBI:43176"/>
        <dbReference type="ChEBI" id="CHEBI:68546"/>
        <dbReference type="ChEBI" id="CHEBI:456216"/>
        <dbReference type="EC" id="2.7.11.23"/>
    </reaction>
</comment>
<comment type="tissue specificity">
    <text evidence="8">Expressed in the dividing region of the root apex and in differentiated cells such as those in the sclerenchyma, pericycle and parenchyma of the central cylinder.</text>
</comment>
<comment type="developmental stage">
    <text evidence="6">Expressed throughout the cell cycle.</text>
</comment>
<comment type="induction">
    <text evidence="5 7">By submergence. Down-regulated by cytokinin.</text>
</comment>
<comment type="PTM">
    <text evidence="4">Phosphorylated at Thr-161 by CDKD-1.</text>
</comment>
<comment type="similarity">
    <text evidence="9">Belongs to the protein kinase superfamily. CMGC Ser/Thr protein kinase family. CDC2/CDKX subfamily.</text>
</comment>
<organism>
    <name type="scientific">Oryza sativa subsp. japonica</name>
    <name type="common">Rice</name>
    <dbReference type="NCBI Taxonomy" id="39947"/>
    <lineage>
        <taxon>Eukaryota</taxon>
        <taxon>Viridiplantae</taxon>
        <taxon>Streptophyta</taxon>
        <taxon>Embryophyta</taxon>
        <taxon>Tracheophyta</taxon>
        <taxon>Spermatophyta</taxon>
        <taxon>Magnoliopsida</taxon>
        <taxon>Liliopsida</taxon>
        <taxon>Poales</taxon>
        <taxon>Poaceae</taxon>
        <taxon>BOP clade</taxon>
        <taxon>Oryzoideae</taxon>
        <taxon>Oryzeae</taxon>
        <taxon>Oryzinae</taxon>
        <taxon>Oryza</taxon>
        <taxon>Oryza sativa</taxon>
    </lineage>
</organism>
<protein>
    <recommendedName>
        <fullName>Cyclin-dependent kinase A-1</fullName>
        <shortName>CDKA;1</shortName>
        <ecNumber>2.7.11.22</ecNumber>
        <ecNumber>2.7.11.23</ecNumber>
    </recommendedName>
    <alternativeName>
        <fullName>CDC2Os-1</fullName>
    </alternativeName>
    <alternativeName>
        <fullName>Cell division control protein 2 homolog 1</fullName>
    </alternativeName>
</protein>
<keyword id="KW-0067">ATP-binding</keyword>
<keyword id="KW-0418">Kinase</keyword>
<keyword id="KW-0547">Nucleotide-binding</keyword>
<keyword id="KW-0597">Phosphoprotein</keyword>
<keyword id="KW-1185">Reference proteome</keyword>
<keyword id="KW-0723">Serine/threonine-protein kinase</keyword>
<keyword id="KW-0808">Transferase</keyword>
<reference key="1">
    <citation type="journal article" date="1992" name="Mol. Gen. Genet.">
        <title>Isolation and characterization of cDNA clones encoding cdc2 homologues from Oryza sativa: a functional homologue and cognate variants.</title>
        <authorList>
            <person name="Hashimoto J."/>
            <person name="Hirabayashi T."/>
            <person name="Hayano Y."/>
            <person name="Hata S."/>
            <person name="Ohashi Y."/>
            <person name="Suzuka I."/>
            <person name="Utsugi T."/>
            <person name="Toh-e A."/>
            <person name="Kikuchi Y."/>
        </authorList>
    </citation>
    <scope>NUCLEOTIDE SEQUENCE [MRNA]</scope>
    <source>
        <strain>cv. Nipponbare</strain>
    </source>
</reference>
<reference key="2">
    <citation type="journal article" date="2005" name="Genome Res.">
        <title>Sequence, annotation, and analysis of synteny between rice chromosome 3 and diverged grass species.</title>
        <authorList>
            <consortium name="The rice chromosome 3 sequencing consortium"/>
            <person name="Buell C.R."/>
            <person name="Yuan Q."/>
            <person name="Ouyang S."/>
            <person name="Liu J."/>
            <person name="Zhu W."/>
            <person name="Wang A."/>
            <person name="Maiti R."/>
            <person name="Haas B."/>
            <person name="Wortman J."/>
            <person name="Pertea M."/>
            <person name="Jones K.M."/>
            <person name="Kim M."/>
            <person name="Overton L."/>
            <person name="Tsitrin T."/>
            <person name="Fadrosh D."/>
            <person name="Bera J."/>
            <person name="Weaver B."/>
            <person name="Jin S."/>
            <person name="Johri S."/>
            <person name="Reardon M."/>
            <person name="Webb K."/>
            <person name="Hill J."/>
            <person name="Moffat K."/>
            <person name="Tallon L."/>
            <person name="Van Aken S."/>
            <person name="Lewis M."/>
            <person name="Utterback T."/>
            <person name="Feldblyum T."/>
            <person name="Zismann V."/>
            <person name="Iobst S."/>
            <person name="Hsiao J."/>
            <person name="de Vazeille A.R."/>
            <person name="Salzberg S.L."/>
            <person name="White O."/>
            <person name="Fraser C.M."/>
            <person name="Yu Y."/>
            <person name="Kim H."/>
            <person name="Rambo T."/>
            <person name="Currie J."/>
            <person name="Collura K."/>
            <person name="Kernodle-Thompson S."/>
            <person name="Wei F."/>
            <person name="Kudrna K."/>
            <person name="Ammiraju J.S.S."/>
            <person name="Luo M."/>
            <person name="Goicoechea J.L."/>
            <person name="Wing R.A."/>
            <person name="Henry D."/>
            <person name="Oates R."/>
            <person name="Palmer M."/>
            <person name="Pries G."/>
            <person name="Saski C."/>
            <person name="Simmons J."/>
            <person name="Soderlund C."/>
            <person name="Nelson W."/>
            <person name="de la Bastide M."/>
            <person name="Spiegel L."/>
            <person name="Nascimento L."/>
            <person name="Huang E."/>
            <person name="Preston R."/>
            <person name="Zutavern T."/>
            <person name="Palmer L."/>
            <person name="O'Shaughnessy A."/>
            <person name="Dike S."/>
            <person name="McCombie W.R."/>
            <person name="Minx P."/>
            <person name="Cordum H."/>
            <person name="Wilson R."/>
            <person name="Jin W."/>
            <person name="Lee H.R."/>
            <person name="Jiang J."/>
            <person name="Jackson S."/>
        </authorList>
    </citation>
    <scope>NUCLEOTIDE SEQUENCE [LARGE SCALE GENOMIC DNA]</scope>
    <source>
        <strain>cv. Nipponbare</strain>
    </source>
</reference>
<reference key="3">
    <citation type="journal article" date="2005" name="Nature">
        <title>The map-based sequence of the rice genome.</title>
        <authorList>
            <consortium name="International rice genome sequencing project (IRGSP)"/>
        </authorList>
    </citation>
    <scope>NUCLEOTIDE SEQUENCE [LARGE SCALE GENOMIC DNA]</scope>
    <source>
        <strain>cv. Nipponbare</strain>
    </source>
</reference>
<reference key="4">
    <citation type="journal article" date="2008" name="Nucleic Acids Res.">
        <title>The rice annotation project database (RAP-DB): 2008 update.</title>
        <authorList>
            <consortium name="The rice annotation project (RAP)"/>
        </authorList>
    </citation>
    <scope>GENOME REANNOTATION</scope>
    <source>
        <strain>cv. Nipponbare</strain>
    </source>
</reference>
<reference key="5">
    <citation type="journal article" date="2013" name="Rice">
        <title>Improvement of the Oryza sativa Nipponbare reference genome using next generation sequence and optical map data.</title>
        <authorList>
            <person name="Kawahara Y."/>
            <person name="de la Bastide M."/>
            <person name="Hamilton J.P."/>
            <person name="Kanamori H."/>
            <person name="McCombie W.R."/>
            <person name="Ouyang S."/>
            <person name="Schwartz D.C."/>
            <person name="Tanaka T."/>
            <person name="Wu J."/>
            <person name="Zhou S."/>
            <person name="Childs K.L."/>
            <person name="Davidson R.M."/>
            <person name="Lin H."/>
            <person name="Quesada-Ocampo L."/>
            <person name="Vaillancourt B."/>
            <person name="Sakai H."/>
            <person name="Lee S.S."/>
            <person name="Kim J."/>
            <person name="Numa H."/>
            <person name="Itoh T."/>
            <person name="Buell C.R."/>
            <person name="Matsumoto T."/>
        </authorList>
    </citation>
    <scope>GENOME REANNOTATION</scope>
    <source>
        <strain>cv. Nipponbare</strain>
    </source>
</reference>
<reference key="6">
    <citation type="journal article" date="1997" name="Plant J.">
        <title>Differential expression of a CAK (cdc2-activating kinase)-like protein kinase, cyclins and cdc2 genes from rice during the cell cycle and in response to gibberellin.</title>
        <authorList>
            <person name="Sauter M."/>
        </authorList>
    </citation>
    <scope>DEVELOPMENTAL STAGE</scope>
</reference>
<reference key="7">
    <citation type="journal article" date="1999" name="Plant Physiol.">
        <title>Adventitious root growth and cell-cycle induction in deepwater rice.</title>
        <authorList>
            <person name="Lorbiecke R."/>
            <person name="Sauter M."/>
        </authorList>
    </citation>
    <scope>INDUCTION</scope>
</reference>
<reference key="8">
    <citation type="journal article" date="1999" name="Plant Physiol.">
        <title>Differential expression of genes for cyclin-dependent protein kinases in rice plants.</title>
        <authorList>
            <person name="Umeda M."/>
            <person name="Umeda-Hara C."/>
            <person name="Yamaguchi M."/>
            <person name="Hashimoto J."/>
            <person name="Uchimiya H."/>
        </authorList>
    </citation>
    <scope>TISSUE SPECIFICITY</scope>
</reference>
<reference key="9">
    <citation type="journal article" date="2000" name="Plant J.">
        <title>Activation of CDK-activating kinase is dependent on interaction with H-type cyclins in plants.</title>
        <authorList>
            <person name="Yamaguchi M."/>
            <person name="Fabian T."/>
            <person name="Sauter M."/>
            <person name="Bhalerao R.P."/>
            <person name="Schrader J."/>
            <person name="Sandberg G."/>
            <person name="Umeda M."/>
            <person name="Uchimiya H."/>
        </authorList>
    </citation>
    <scope>PHOSPHORYLATION AT THR-161</scope>
    <scope>MUTAGENESIS OF THR-161</scope>
</reference>
<reference key="10">
    <citation type="journal article" date="2007" name="Plant Mol. Biol.">
        <title>Genome-wide identification and expression analysis of rice cell cycle genes.</title>
        <authorList>
            <person name="Guo J."/>
            <person name="Song J."/>
            <person name="Wang F."/>
            <person name="Zhang X.S."/>
        </authorList>
    </citation>
    <scope>INDUCTION AND GENE FAMILY</scope>
</reference>
<name>CDKA1_ORYSJ</name>
<dbReference type="EC" id="2.7.11.22"/>
<dbReference type="EC" id="2.7.11.23"/>
<dbReference type="EMBL" id="X60374">
    <property type="protein sequence ID" value="CAA42922.1"/>
    <property type="molecule type" value="mRNA"/>
</dbReference>
<dbReference type="EMBL" id="DP000009">
    <property type="protein sequence ID" value="ABF93669.1"/>
    <property type="molecule type" value="Genomic_DNA"/>
</dbReference>
<dbReference type="EMBL" id="AP008209">
    <property type="protein sequence ID" value="BAF10686.1"/>
    <property type="molecule type" value="Genomic_DNA"/>
</dbReference>
<dbReference type="EMBL" id="AP014959">
    <property type="status" value="NOT_ANNOTATED_CDS"/>
    <property type="molecule type" value="Genomic_DNA"/>
</dbReference>
<dbReference type="PIR" id="S22440">
    <property type="entry name" value="S22440"/>
</dbReference>
<dbReference type="RefSeq" id="XP_015631633.1">
    <property type="nucleotide sequence ID" value="XM_015776147.1"/>
</dbReference>
<dbReference type="SMR" id="P29618"/>
<dbReference type="FunCoup" id="P29618">
    <property type="interactions" value="2901"/>
</dbReference>
<dbReference type="STRING" id="39947.P29618"/>
<dbReference type="iPTMnet" id="P29618"/>
<dbReference type="PaxDb" id="39947-P29618"/>
<dbReference type="KEGG" id="dosa:Os03g0118400"/>
<dbReference type="eggNOG" id="KOG0594">
    <property type="taxonomic scope" value="Eukaryota"/>
</dbReference>
<dbReference type="InParanoid" id="P29618"/>
<dbReference type="OrthoDB" id="1732493at2759"/>
<dbReference type="PlantReactome" id="R-OSA-9640760">
    <property type="pathway name" value="G1 phase"/>
</dbReference>
<dbReference type="PlantReactome" id="R-OSA-9640887">
    <property type="pathway name" value="G1/S transition"/>
</dbReference>
<dbReference type="Proteomes" id="UP000000763">
    <property type="component" value="Chromosome 3"/>
</dbReference>
<dbReference type="Proteomes" id="UP000059680">
    <property type="component" value="Chromosome 3"/>
</dbReference>
<dbReference type="GO" id="GO:0000307">
    <property type="term" value="C:cyclin-dependent protein kinase holoenzyme complex"/>
    <property type="evidence" value="ECO:0000318"/>
    <property type="project" value="GO_Central"/>
</dbReference>
<dbReference type="GO" id="GO:0005737">
    <property type="term" value="C:cytoplasm"/>
    <property type="evidence" value="ECO:0000318"/>
    <property type="project" value="GO_Central"/>
</dbReference>
<dbReference type="GO" id="GO:0005634">
    <property type="term" value="C:nucleus"/>
    <property type="evidence" value="ECO:0000318"/>
    <property type="project" value="GO_Central"/>
</dbReference>
<dbReference type="GO" id="GO:0005524">
    <property type="term" value="F:ATP binding"/>
    <property type="evidence" value="ECO:0007669"/>
    <property type="project" value="UniProtKB-KW"/>
</dbReference>
<dbReference type="GO" id="GO:0030332">
    <property type="term" value="F:cyclin binding"/>
    <property type="evidence" value="ECO:0000318"/>
    <property type="project" value="GO_Central"/>
</dbReference>
<dbReference type="GO" id="GO:0004693">
    <property type="term" value="F:cyclin-dependent protein serine/threonine kinase activity"/>
    <property type="evidence" value="ECO:0000318"/>
    <property type="project" value="GO_Central"/>
</dbReference>
<dbReference type="GO" id="GO:0106310">
    <property type="term" value="F:protein serine kinase activity"/>
    <property type="evidence" value="ECO:0007669"/>
    <property type="project" value="RHEA"/>
</dbReference>
<dbReference type="GO" id="GO:0008353">
    <property type="term" value="F:RNA polymerase II CTD heptapeptide repeat kinase activity"/>
    <property type="evidence" value="ECO:0007669"/>
    <property type="project" value="UniProtKB-EC"/>
</dbReference>
<dbReference type="GO" id="GO:0000082">
    <property type="term" value="P:G1/S transition of mitotic cell cycle"/>
    <property type="evidence" value="ECO:0000318"/>
    <property type="project" value="GO_Central"/>
</dbReference>
<dbReference type="GO" id="GO:0010389">
    <property type="term" value="P:regulation of G2/M transition of mitotic cell cycle"/>
    <property type="evidence" value="ECO:0000318"/>
    <property type="project" value="GO_Central"/>
</dbReference>
<dbReference type="GO" id="GO:0010468">
    <property type="term" value="P:regulation of gene expression"/>
    <property type="evidence" value="ECO:0000318"/>
    <property type="project" value="GO_Central"/>
</dbReference>
<dbReference type="GO" id="GO:0051445">
    <property type="term" value="P:regulation of meiotic cell cycle"/>
    <property type="evidence" value="ECO:0000318"/>
    <property type="project" value="GO_Central"/>
</dbReference>
<dbReference type="GO" id="GO:0007165">
    <property type="term" value="P:signal transduction"/>
    <property type="evidence" value="ECO:0000318"/>
    <property type="project" value="GO_Central"/>
</dbReference>
<dbReference type="CDD" id="cd07835">
    <property type="entry name" value="STKc_CDK1_CdkB_like"/>
    <property type="match status" value="1"/>
</dbReference>
<dbReference type="FunFam" id="3.30.200.20:FF:000187">
    <property type="entry name" value="Cell division control protein 2"/>
    <property type="match status" value="1"/>
</dbReference>
<dbReference type="FunFam" id="1.10.510.10:FF:000280">
    <property type="entry name" value="Cell division control protein 2 homolog"/>
    <property type="match status" value="1"/>
</dbReference>
<dbReference type="Gene3D" id="3.30.200.20">
    <property type="entry name" value="Phosphorylase Kinase, domain 1"/>
    <property type="match status" value="1"/>
</dbReference>
<dbReference type="Gene3D" id="1.10.510.10">
    <property type="entry name" value="Transferase(Phosphotransferase) domain 1"/>
    <property type="match status" value="1"/>
</dbReference>
<dbReference type="InterPro" id="IPR050108">
    <property type="entry name" value="CDK"/>
</dbReference>
<dbReference type="InterPro" id="IPR011009">
    <property type="entry name" value="Kinase-like_dom_sf"/>
</dbReference>
<dbReference type="InterPro" id="IPR000719">
    <property type="entry name" value="Prot_kinase_dom"/>
</dbReference>
<dbReference type="InterPro" id="IPR017441">
    <property type="entry name" value="Protein_kinase_ATP_BS"/>
</dbReference>
<dbReference type="InterPro" id="IPR008271">
    <property type="entry name" value="Ser/Thr_kinase_AS"/>
</dbReference>
<dbReference type="PANTHER" id="PTHR24056">
    <property type="entry name" value="CELL DIVISION PROTEIN KINASE"/>
    <property type="match status" value="1"/>
</dbReference>
<dbReference type="PANTHER" id="PTHR24056:SF549">
    <property type="entry name" value="CYCLIN-DEPENDENT KINASE A-1"/>
    <property type="match status" value="1"/>
</dbReference>
<dbReference type="Pfam" id="PF00069">
    <property type="entry name" value="Pkinase"/>
    <property type="match status" value="1"/>
</dbReference>
<dbReference type="SMART" id="SM00220">
    <property type="entry name" value="S_TKc"/>
    <property type="match status" value="1"/>
</dbReference>
<dbReference type="SUPFAM" id="SSF56112">
    <property type="entry name" value="Protein kinase-like (PK-like)"/>
    <property type="match status" value="1"/>
</dbReference>
<dbReference type="PROSITE" id="PS00107">
    <property type="entry name" value="PROTEIN_KINASE_ATP"/>
    <property type="match status" value="1"/>
</dbReference>
<dbReference type="PROSITE" id="PS50011">
    <property type="entry name" value="PROTEIN_KINASE_DOM"/>
    <property type="match status" value="1"/>
</dbReference>
<dbReference type="PROSITE" id="PS00108">
    <property type="entry name" value="PROTEIN_KINASE_ST"/>
    <property type="match status" value="1"/>
</dbReference>
<accession>P29618</accession>
<accession>Q10SL8</accession>